<reference key="1">
    <citation type="journal article" date="2002" name="Genome Res.">
        <title>A complete sequence of the T. tengcongensis genome.</title>
        <authorList>
            <person name="Bao Q."/>
            <person name="Tian Y."/>
            <person name="Li W."/>
            <person name="Xu Z."/>
            <person name="Xuan Z."/>
            <person name="Hu S."/>
            <person name="Dong W."/>
            <person name="Yang J."/>
            <person name="Chen Y."/>
            <person name="Xue Y."/>
            <person name="Xu Y."/>
            <person name="Lai X."/>
            <person name="Huang L."/>
            <person name="Dong X."/>
            <person name="Ma Y."/>
            <person name="Ling L."/>
            <person name="Tan H."/>
            <person name="Chen R."/>
            <person name="Wang J."/>
            <person name="Yu J."/>
            <person name="Yang H."/>
        </authorList>
    </citation>
    <scope>NUCLEOTIDE SEQUENCE [LARGE SCALE GENOMIC DNA]</scope>
    <source>
        <strain>DSM 15242 / JCM 11007 / NBRC 100824 / MB4</strain>
    </source>
</reference>
<protein>
    <recommendedName>
        <fullName evidence="1">Foldase protein PrsA</fullName>
        <ecNumber evidence="1">5.2.1.8</ecNumber>
    </recommendedName>
</protein>
<comment type="function">
    <text evidence="1">Plays a major role in protein secretion by helping the post-translocational extracellular folding of several secreted proteins.</text>
</comment>
<comment type="catalytic activity">
    <reaction evidence="1">
        <text>[protein]-peptidylproline (omega=180) = [protein]-peptidylproline (omega=0)</text>
        <dbReference type="Rhea" id="RHEA:16237"/>
        <dbReference type="Rhea" id="RHEA-COMP:10747"/>
        <dbReference type="Rhea" id="RHEA-COMP:10748"/>
        <dbReference type="ChEBI" id="CHEBI:83833"/>
        <dbReference type="ChEBI" id="CHEBI:83834"/>
        <dbReference type="EC" id="5.2.1.8"/>
    </reaction>
</comment>
<comment type="subcellular location">
    <subcellularLocation>
        <location evidence="1">Cell membrane</location>
        <topology evidence="1">Lipid-anchor</topology>
    </subcellularLocation>
</comment>
<comment type="similarity">
    <text evidence="1">Belongs to the PrsA family.</text>
</comment>
<keyword id="KW-1003">Cell membrane</keyword>
<keyword id="KW-0413">Isomerase</keyword>
<keyword id="KW-0449">Lipoprotein</keyword>
<keyword id="KW-0472">Membrane</keyword>
<keyword id="KW-0564">Palmitate</keyword>
<keyword id="KW-1185">Reference proteome</keyword>
<keyword id="KW-0697">Rotamase</keyword>
<keyword id="KW-0732">Signal</keyword>
<organism>
    <name type="scientific">Caldanaerobacter subterraneus subsp. tengcongensis (strain DSM 15242 / JCM 11007 / NBRC 100824 / MB4)</name>
    <name type="common">Thermoanaerobacter tengcongensis</name>
    <dbReference type="NCBI Taxonomy" id="273068"/>
    <lineage>
        <taxon>Bacteria</taxon>
        <taxon>Bacillati</taxon>
        <taxon>Bacillota</taxon>
        <taxon>Clostridia</taxon>
        <taxon>Thermoanaerobacterales</taxon>
        <taxon>Thermoanaerobacteraceae</taxon>
        <taxon>Caldanaerobacter</taxon>
    </lineage>
</organism>
<proteinExistence type="inferred from homology"/>
<name>PRSA_CALS4</name>
<accession>Q8R760</accession>
<evidence type="ECO:0000255" key="1">
    <source>
        <dbReference type="HAMAP-Rule" id="MF_01145"/>
    </source>
</evidence>
<feature type="signal peptide" evidence="1">
    <location>
        <begin position="1"/>
        <end position="20"/>
    </location>
</feature>
<feature type="chain" id="PRO_0000029337" description="Foldase protein PrsA">
    <location>
        <begin position="21"/>
        <end position="306"/>
    </location>
</feature>
<feature type="domain" description="PpiC" evidence="1">
    <location>
        <begin position="165"/>
        <end position="255"/>
    </location>
</feature>
<feature type="lipid moiety-binding region" description="N-palmitoyl cysteine" evidence="1">
    <location>
        <position position="21"/>
    </location>
</feature>
<feature type="lipid moiety-binding region" description="S-diacylglycerol cysteine" evidence="1">
    <location>
        <position position="21"/>
    </location>
</feature>
<dbReference type="EC" id="5.2.1.8" evidence="1"/>
<dbReference type="EMBL" id="AE008691">
    <property type="protein sequence ID" value="AAM25688.1"/>
    <property type="molecule type" value="Genomic_DNA"/>
</dbReference>
<dbReference type="RefSeq" id="WP_011026565.1">
    <property type="nucleotide sequence ID" value="NZ_JANUCV010000001.1"/>
</dbReference>
<dbReference type="SMR" id="Q8R760"/>
<dbReference type="STRING" id="273068.TTE2564"/>
<dbReference type="KEGG" id="tte:TTE2564"/>
<dbReference type="eggNOG" id="COG0760">
    <property type="taxonomic scope" value="Bacteria"/>
</dbReference>
<dbReference type="HOGENOM" id="CLU_034646_5_2_9"/>
<dbReference type="OrthoDB" id="14196at2"/>
<dbReference type="Proteomes" id="UP000000555">
    <property type="component" value="Chromosome"/>
</dbReference>
<dbReference type="GO" id="GO:0005886">
    <property type="term" value="C:plasma membrane"/>
    <property type="evidence" value="ECO:0007669"/>
    <property type="project" value="UniProtKB-SubCell"/>
</dbReference>
<dbReference type="GO" id="GO:0003755">
    <property type="term" value="F:peptidyl-prolyl cis-trans isomerase activity"/>
    <property type="evidence" value="ECO:0007669"/>
    <property type="project" value="UniProtKB-UniRule"/>
</dbReference>
<dbReference type="GO" id="GO:0006457">
    <property type="term" value="P:protein folding"/>
    <property type="evidence" value="ECO:0007669"/>
    <property type="project" value="UniProtKB-UniRule"/>
</dbReference>
<dbReference type="Gene3D" id="3.10.50.40">
    <property type="match status" value="1"/>
</dbReference>
<dbReference type="Gene3D" id="1.10.4030.10">
    <property type="entry name" value="Porin chaperone SurA, peptide-binding domain"/>
    <property type="match status" value="1"/>
</dbReference>
<dbReference type="HAMAP" id="MF_01145">
    <property type="entry name" value="Foldase_PrsA"/>
    <property type="match status" value="1"/>
</dbReference>
<dbReference type="InterPro" id="IPR023059">
    <property type="entry name" value="Foldase_PrsA"/>
</dbReference>
<dbReference type="InterPro" id="IPR046357">
    <property type="entry name" value="PPIase_dom_sf"/>
</dbReference>
<dbReference type="InterPro" id="IPR000297">
    <property type="entry name" value="PPIase_PpiC"/>
</dbReference>
<dbReference type="InterPro" id="IPR023058">
    <property type="entry name" value="PPIase_PpiC_CS"/>
</dbReference>
<dbReference type="InterPro" id="IPR050245">
    <property type="entry name" value="PrsA_foldase"/>
</dbReference>
<dbReference type="InterPro" id="IPR027304">
    <property type="entry name" value="Trigger_fact/SurA_dom_sf"/>
</dbReference>
<dbReference type="PANTHER" id="PTHR47245:SF1">
    <property type="entry name" value="FOLDASE PROTEIN PRSA"/>
    <property type="match status" value="1"/>
</dbReference>
<dbReference type="PANTHER" id="PTHR47245">
    <property type="entry name" value="PEPTIDYLPROLYL ISOMERASE"/>
    <property type="match status" value="1"/>
</dbReference>
<dbReference type="Pfam" id="PF13616">
    <property type="entry name" value="Rotamase_3"/>
    <property type="match status" value="1"/>
</dbReference>
<dbReference type="Pfam" id="PF13624">
    <property type="entry name" value="SurA_N_3"/>
    <property type="match status" value="1"/>
</dbReference>
<dbReference type="SUPFAM" id="SSF54534">
    <property type="entry name" value="FKBP-like"/>
    <property type="match status" value="1"/>
</dbReference>
<dbReference type="SUPFAM" id="SSF109998">
    <property type="entry name" value="Triger factor/SurA peptide-binding domain-like"/>
    <property type="match status" value="1"/>
</dbReference>
<dbReference type="PROSITE" id="PS01096">
    <property type="entry name" value="PPIC_PPIASE_1"/>
    <property type="match status" value="1"/>
</dbReference>
<dbReference type="PROSITE" id="PS50198">
    <property type="entry name" value="PPIC_PPIASE_2"/>
    <property type="match status" value="1"/>
</dbReference>
<dbReference type="PROSITE" id="PS51257">
    <property type="entry name" value="PROKAR_LIPOPROTEIN"/>
    <property type="match status" value="1"/>
</dbReference>
<gene>
    <name evidence="1" type="primary">prsA</name>
    <name type="ordered locus">TTE2564</name>
</gene>
<sequence length="306" mass="35105">MRRKIALFLALIFVGVSLVSCSSKKEAVSGDVVAVVNGEKITNAEYQQIFEQVKEQIESAPTYTKDIWNQDYQGKKFLDFVKENVLDSLVAQKLLVQEAKKKNITVTDKEVEEEYNKEKQFNSKVTKEQIREYLLIDKLLAEYTKDVKVTDEELKKYYDEHKESFEVMRARHILVADEKTAEDIYQRLMKGEDFAALAKEYSIDTATKDNGGDLGEFPHGVMVPEFEEAAFSLKLGEISKPVKTQYGYHIIKSEGITVKPFDEVKGTIESYLLNDKKNKVIKEKYDELVKASKIQKFPENIKVKVG</sequence>